<name>BCSD2_KOMSB</name>
<feature type="chain" id="PRO_0000450838" description="Cellulose synthase operon protein D">
    <location>
        <begin position="1"/>
        <end position="156"/>
    </location>
</feature>
<sequence>MTTLNAKPDFSLFLQALSWEIDDQAGIEVRNDLLREVGRGMAGRFQPPLCNTIHQLQIELNALLAMINWGYVKLDLLAEEQAMRIVHEDLPQVGSAGEPAGTWLAPVLEGLYGRWITSQPGAFGDYVVTRDIDAEDLNSVPAQTVILYMRTRSAAT</sequence>
<keyword id="KW-0135">Cellulose biosynthesis</keyword>
<gene>
    <name evidence="1" type="primary">bcsD</name>
</gene>
<accession>P0DTX1</accession>
<accession>O82862</accession>
<accession>P19451</accession>
<protein>
    <recommendedName>
        <fullName>Cellulose synthase operon protein D</fullName>
    </recommendedName>
</protein>
<dbReference type="EMBL" id="AB010645">
    <property type="protein sequence ID" value="BAA31466.1"/>
    <property type="molecule type" value="Genomic_DNA"/>
</dbReference>
<dbReference type="RefSeq" id="WP_061271618.1">
    <property type="nucleotide sequence ID" value="NZ_CP137157.1"/>
</dbReference>
<dbReference type="SMR" id="P0DTX1"/>
<dbReference type="UniPathway" id="UPA00694"/>
<dbReference type="GO" id="GO:0030244">
    <property type="term" value="P:cellulose biosynthetic process"/>
    <property type="evidence" value="ECO:0007669"/>
    <property type="project" value="UniProtKB-KW"/>
</dbReference>
<dbReference type="Gene3D" id="1.20.5.3790">
    <property type="match status" value="1"/>
</dbReference>
<dbReference type="Gene3D" id="3.30.70.2590">
    <property type="match status" value="1"/>
</dbReference>
<dbReference type="InterPro" id="IPR022798">
    <property type="entry name" value="BcsD_bac"/>
</dbReference>
<dbReference type="InterPro" id="IPR038470">
    <property type="entry name" value="Cellsynth_D_sf"/>
</dbReference>
<dbReference type="Pfam" id="PF03500">
    <property type="entry name" value="Cellsynth_D"/>
    <property type="match status" value="1"/>
</dbReference>
<dbReference type="PRINTS" id="PR01442">
    <property type="entry name" value="CELLSNTHASED"/>
</dbReference>
<organism>
    <name type="scientific">Komagataeibacter sucrofermentans (strain ATCC 700178 / DSM 15973 / CECT 7291 / JCM 9730 / LMG 18788 / BPR 2001)</name>
    <name type="common">Acetobacter xylinus subsp. sucrofermentans</name>
    <dbReference type="NCBI Taxonomy" id="1307942"/>
    <lineage>
        <taxon>Bacteria</taxon>
        <taxon>Pseudomonadati</taxon>
        <taxon>Pseudomonadota</taxon>
        <taxon>Alphaproteobacteria</taxon>
        <taxon>Acetobacterales</taxon>
        <taxon>Acetobacteraceae</taxon>
        <taxon>Komagataeibacter</taxon>
    </lineage>
</organism>
<evidence type="ECO:0000303" key="1">
    <source>
    </source>
</evidence>
<reference key="1">
    <citation type="journal article" date="1998" name="Gene">
        <title>Control of expression by the cellulose synthase (bcsA) promoter region from Acetobacter xylinum BPR 2001.</title>
        <authorList>
            <person name="Nakai T."/>
            <person name="Moriya A."/>
            <person name="Tonouchi N."/>
            <person name="Tsuchida T."/>
            <person name="Yoshinaga F."/>
            <person name="Horinouchi S."/>
            <person name="Sone Y."/>
            <person name="Mori H."/>
            <person name="Sakai F."/>
            <person name="Hayashi T."/>
        </authorList>
    </citation>
    <scope>NUCLEOTIDE SEQUENCE [GENOMIC DNA]</scope>
    <source>
        <strain>ATCC 700178 / DSM 15973 / CECT 7291 / JCM 9730 / LMG 18788 / BPR 2001</strain>
    </source>
</reference>
<comment type="function">
    <text>May have a major role in the perfection of crystallization, involved either in the pore structure itself or in the organization of the pores within the linear array of terminal synthesizing complexes (TCs).</text>
</comment>
<comment type="pathway">
    <text>Glycan metabolism; bacterial cellulose biosynthesis.</text>
</comment>
<proteinExistence type="predicted"/>